<gene>
    <name type="primary">Cdkal1</name>
</gene>
<name>CDKAL_MOUSE</name>
<proteinExistence type="evidence at protein level"/>
<feature type="chain" id="PRO_0000298671" description="Threonylcarbamoyladenosine tRNA methylthiotransferase">
    <location>
        <begin position="1"/>
        <end position="578"/>
    </location>
</feature>
<feature type="transmembrane region" description="Helical" evidence="2">
    <location>
        <begin position="553"/>
        <end position="570"/>
    </location>
</feature>
<feature type="domain" description="MTTase N-terminal" evidence="4">
    <location>
        <begin position="63"/>
        <end position="171"/>
    </location>
</feature>
<feature type="domain" description="Radical SAM core" evidence="5">
    <location>
        <begin position="199"/>
        <end position="430"/>
    </location>
</feature>
<feature type="domain" description="TRAM" evidence="3">
    <location>
        <begin position="430"/>
        <end position="492"/>
    </location>
</feature>
<feature type="binding site" evidence="4">
    <location>
        <position position="72"/>
    </location>
    <ligand>
        <name>[4Fe-4S] cluster</name>
        <dbReference type="ChEBI" id="CHEBI:49883"/>
        <label>1</label>
    </ligand>
</feature>
<feature type="binding site" evidence="4">
    <location>
        <position position="108"/>
    </location>
    <ligand>
        <name>[4Fe-4S] cluster</name>
        <dbReference type="ChEBI" id="CHEBI:49883"/>
        <label>1</label>
    </ligand>
</feature>
<feature type="binding site" evidence="4">
    <location>
        <position position="137"/>
    </location>
    <ligand>
        <name>[4Fe-4S] cluster</name>
        <dbReference type="ChEBI" id="CHEBI:49883"/>
        <label>1</label>
    </ligand>
</feature>
<feature type="binding site" evidence="4">
    <location>
        <position position="213"/>
    </location>
    <ligand>
        <name>[4Fe-4S] cluster</name>
        <dbReference type="ChEBI" id="CHEBI:49883"/>
        <label>2</label>
        <note>4Fe-4S-S-AdoMet</note>
    </ligand>
</feature>
<feature type="binding site" evidence="4">
    <location>
        <position position="217"/>
    </location>
    <ligand>
        <name>[4Fe-4S] cluster</name>
        <dbReference type="ChEBI" id="CHEBI:49883"/>
        <label>2</label>
        <note>4Fe-4S-S-AdoMet</note>
    </ligand>
</feature>
<feature type="binding site" evidence="4">
    <location>
        <position position="220"/>
    </location>
    <ligand>
        <name>[4Fe-4S] cluster</name>
        <dbReference type="ChEBI" id="CHEBI:49883"/>
        <label>2</label>
        <note>4Fe-4S-S-AdoMet</note>
    </ligand>
</feature>
<feature type="modified residue" description="Phosphoserine" evidence="1">
    <location>
        <position position="121"/>
    </location>
</feature>
<feature type="modified residue" description="Phosphothreonine" evidence="1">
    <location>
        <position position="498"/>
    </location>
</feature>
<feature type="splice variant" id="VSP_027454" description="In isoform 5." evidence="8">
    <original>ENASDADLWLLNSCTVKNPAEDHFRNSIKKAQEENKKVVLA</original>
    <variation>AQSGTESSLGAMELIHHPVRTVLHSVRCRVLKTPLILLVVWW</variation>
    <location>
        <begin position="95"/>
        <end position="135"/>
    </location>
</feature>
<feature type="splice variant" id="VSP_027455" description="In isoform 5." evidence="8">
    <location>
        <begin position="136"/>
        <end position="578"/>
    </location>
</feature>
<feature type="splice variant" id="VSP_027456" description="In isoform 4." evidence="8">
    <location>
        <begin position="213"/>
        <end position="360"/>
    </location>
</feature>
<feature type="splice variant" id="VSP_027457" description="In isoform 3." evidence="8">
    <location>
        <begin position="352"/>
        <end position="578"/>
    </location>
</feature>
<feature type="splice variant" id="VSP_027458" description="In isoform 4." evidence="8">
    <original>P</original>
    <variation>L</variation>
    <location>
        <position position="366"/>
    </location>
</feature>
<feature type="splice variant" id="VSP_027459" description="In isoform 4." evidence="8">
    <location>
        <begin position="367"/>
        <end position="578"/>
    </location>
</feature>
<feature type="splice variant" id="VSP_027460" description="In isoform 2." evidence="8">
    <original>EFRNRLGNHPNGTSDTCPATQHGSAYSRMVLQMSQYDCALKVATGLALLALLLHFWPDSLLTM</original>
    <variation>ALDYL</variation>
    <location>
        <begin position="516"/>
        <end position="578"/>
    </location>
</feature>
<comment type="function">
    <text evidence="6">Catalyzes the methylthiolation of N6-threonylcarbamoyladenosine (t(6)A), leading to the formation of 2-methylthio-N6-threonylcarbamoyladenosine (ms(2)t(6)A) at position 37 in tRNAs that read codons beginning with adenine.</text>
</comment>
<comment type="catalytic activity">
    <reaction evidence="6">
        <text>N(6)-L-threonylcarbamoyladenosine(37) in tRNA + (sulfur carrier)-SH + AH2 + 2 S-adenosyl-L-methionine = 2-methylsulfanyl-N(6)-L-threonylcarbamoyladenosine(37) in tRNA + (sulfur carrier)-H + 5'-deoxyadenosine + L-methionine + A + S-adenosyl-L-homocysteine + 2 H(+)</text>
        <dbReference type="Rhea" id="RHEA:37075"/>
        <dbReference type="Rhea" id="RHEA-COMP:10163"/>
        <dbReference type="Rhea" id="RHEA-COMP:11092"/>
        <dbReference type="Rhea" id="RHEA-COMP:14737"/>
        <dbReference type="Rhea" id="RHEA-COMP:14739"/>
        <dbReference type="ChEBI" id="CHEBI:13193"/>
        <dbReference type="ChEBI" id="CHEBI:15378"/>
        <dbReference type="ChEBI" id="CHEBI:17319"/>
        <dbReference type="ChEBI" id="CHEBI:17499"/>
        <dbReference type="ChEBI" id="CHEBI:29917"/>
        <dbReference type="ChEBI" id="CHEBI:57844"/>
        <dbReference type="ChEBI" id="CHEBI:57856"/>
        <dbReference type="ChEBI" id="CHEBI:59789"/>
        <dbReference type="ChEBI" id="CHEBI:64428"/>
        <dbReference type="ChEBI" id="CHEBI:74418"/>
        <dbReference type="ChEBI" id="CHEBI:74420"/>
        <dbReference type="EC" id="2.8.4.5"/>
    </reaction>
</comment>
<comment type="cofactor">
    <cofactor evidence="4">
        <name>[4Fe-4S] cluster</name>
        <dbReference type="ChEBI" id="CHEBI:49883"/>
    </cofactor>
    <text evidence="4">Binds 2 [4Fe-4S] clusters. One cluster is coordinated with 3 cysteines and an exchangeable S-adenosyl-L-methionine.</text>
</comment>
<comment type="subcellular location">
    <subcellularLocation>
        <location evidence="1">Endoplasmic reticulum membrane</location>
        <topology evidence="2">Single-pass membrane protein</topology>
    </subcellularLocation>
    <text evidence="1">Is a tail-anchored protein that exploits the TCR40 assisted pathway for insertion into the endoplasmic reticulum.</text>
</comment>
<comment type="alternative products">
    <event type="alternative splicing"/>
    <isoform>
        <id>Q91WE6-1</id>
        <name>1</name>
        <sequence type="displayed"/>
    </isoform>
    <isoform>
        <id>Q91WE6-2</id>
        <name>2</name>
        <sequence type="described" ref="VSP_027460"/>
    </isoform>
    <isoform>
        <id>Q91WE6-3</id>
        <name>3</name>
        <sequence type="described" ref="VSP_027457"/>
    </isoform>
    <isoform>
        <id>Q91WE6-4</id>
        <name>4</name>
        <sequence type="described" ref="VSP_027456 VSP_027458 VSP_027459"/>
    </isoform>
    <isoform>
        <id>Q91WE6-5</id>
        <name>5</name>
        <sequence type="described" ref="VSP_027454 VSP_027455"/>
    </isoform>
</comment>
<comment type="tissue specificity">
    <text evidence="7">Expressed in pancreas, liver and skeletal muscle, especially in white muscle fibers.</text>
</comment>
<comment type="similarity">
    <text evidence="9">Belongs to the methylthiotransferase family. CDKAL1 subfamily.</text>
</comment>
<keyword id="KW-0004">4Fe-4S</keyword>
<keyword id="KW-0025">Alternative splicing</keyword>
<keyword id="KW-0256">Endoplasmic reticulum</keyword>
<keyword id="KW-0408">Iron</keyword>
<keyword id="KW-0411">Iron-sulfur</keyword>
<keyword id="KW-0472">Membrane</keyword>
<keyword id="KW-0479">Metal-binding</keyword>
<keyword id="KW-0597">Phosphoprotein</keyword>
<keyword id="KW-1185">Reference proteome</keyword>
<keyword id="KW-0949">S-adenosyl-L-methionine</keyword>
<keyword id="KW-0808">Transferase</keyword>
<keyword id="KW-0812">Transmembrane</keyword>
<keyword id="KW-1133">Transmembrane helix</keyword>
<keyword id="KW-0819">tRNA processing</keyword>
<organism>
    <name type="scientific">Mus musculus</name>
    <name type="common">Mouse</name>
    <dbReference type="NCBI Taxonomy" id="10090"/>
    <lineage>
        <taxon>Eukaryota</taxon>
        <taxon>Metazoa</taxon>
        <taxon>Chordata</taxon>
        <taxon>Craniata</taxon>
        <taxon>Vertebrata</taxon>
        <taxon>Euteleostomi</taxon>
        <taxon>Mammalia</taxon>
        <taxon>Eutheria</taxon>
        <taxon>Euarchontoglires</taxon>
        <taxon>Glires</taxon>
        <taxon>Rodentia</taxon>
        <taxon>Myomorpha</taxon>
        <taxon>Muroidea</taxon>
        <taxon>Muridae</taxon>
        <taxon>Murinae</taxon>
        <taxon>Mus</taxon>
        <taxon>Mus</taxon>
    </lineage>
</organism>
<evidence type="ECO:0000250" key="1">
    <source>
        <dbReference type="UniProtKB" id="Q5VV42"/>
    </source>
</evidence>
<evidence type="ECO:0000255" key="2"/>
<evidence type="ECO:0000255" key="3">
    <source>
        <dbReference type="PROSITE-ProRule" id="PRU00208"/>
    </source>
</evidence>
<evidence type="ECO:0000255" key="4">
    <source>
        <dbReference type="PROSITE-ProRule" id="PRU00780"/>
    </source>
</evidence>
<evidence type="ECO:0000255" key="5">
    <source>
        <dbReference type="PROSITE-ProRule" id="PRU01266"/>
    </source>
</evidence>
<evidence type="ECO:0000269" key="6">
    <source>
    </source>
</evidence>
<evidence type="ECO:0000269" key="7">
    <source>
    </source>
</evidence>
<evidence type="ECO:0000303" key="8">
    <source>
    </source>
</evidence>
<evidence type="ECO:0000305" key="9"/>
<protein>
    <recommendedName>
        <fullName>Threonylcarbamoyladenosine tRNA methylthiotransferase</fullName>
        <ecNumber evidence="6">2.8.4.5</ecNumber>
    </recommendedName>
    <alternativeName>
        <fullName>CDK5 regulatory subunit-associated protein 1-like 1</fullName>
    </alternativeName>
    <alternativeName>
        <fullName>tRNA-t(6)A37 methylthiotransferase</fullName>
    </alternativeName>
</protein>
<dbReference type="EC" id="2.8.4.5" evidence="6"/>
<dbReference type="EMBL" id="AK004490">
    <property type="protein sequence ID" value="BAB23330.1"/>
    <property type="molecule type" value="mRNA"/>
</dbReference>
<dbReference type="EMBL" id="AK041864">
    <property type="protein sequence ID" value="BAE20608.1"/>
    <property type="molecule type" value="mRNA"/>
</dbReference>
<dbReference type="EMBL" id="AK045506">
    <property type="protein sequence ID" value="BAE43325.1"/>
    <property type="molecule type" value="mRNA"/>
</dbReference>
<dbReference type="EMBL" id="AK082629">
    <property type="protein sequence ID" value="BAC38554.1"/>
    <property type="molecule type" value="mRNA"/>
</dbReference>
<dbReference type="EMBL" id="AK169761">
    <property type="protein sequence ID" value="BAE41351.1"/>
    <property type="molecule type" value="mRNA"/>
</dbReference>
<dbReference type="EMBL" id="AL513025">
    <property type="protein sequence ID" value="CAI24677.1"/>
    <property type="molecule type" value="Genomic_DNA"/>
</dbReference>
<dbReference type="EMBL" id="AL512647">
    <property type="protein sequence ID" value="CAI24677.1"/>
    <property type="status" value="JOINED"/>
    <property type="molecule type" value="Genomic_DNA"/>
</dbReference>
<dbReference type="EMBL" id="AL589701">
    <property type="protein sequence ID" value="CAI24677.1"/>
    <property type="status" value="JOINED"/>
    <property type="molecule type" value="Genomic_DNA"/>
</dbReference>
<dbReference type="EMBL" id="AL645587">
    <property type="protein sequence ID" value="CAI24677.1"/>
    <property type="status" value="JOINED"/>
    <property type="molecule type" value="Genomic_DNA"/>
</dbReference>
<dbReference type="EMBL" id="AL512647">
    <property type="protein sequence ID" value="CAI25816.1"/>
    <property type="molecule type" value="Genomic_DNA"/>
</dbReference>
<dbReference type="EMBL" id="AL513025">
    <property type="protein sequence ID" value="CAI25816.1"/>
    <property type="status" value="JOINED"/>
    <property type="molecule type" value="Genomic_DNA"/>
</dbReference>
<dbReference type="EMBL" id="AL589701">
    <property type="protein sequence ID" value="CAI25816.1"/>
    <property type="status" value="JOINED"/>
    <property type="molecule type" value="Genomic_DNA"/>
</dbReference>
<dbReference type="EMBL" id="AL645587">
    <property type="protein sequence ID" value="CAI25816.1"/>
    <property type="status" value="JOINED"/>
    <property type="molecule type" value="Genomic_DNA"/>
</dbReference>
<dbReference type="EMBL" id="AL645587">
    <property type="protein sequence ID" value="CAI35144.1"/>
    <property type="molecule type" value="Genomic_DNA"/>
</dbReference>
<dbReference type="EMBL" id="AL512647">
    <property type="protein sequence ID" value="CAI35144.1"/>
    <property type="status" value="JOINED"/>
    <property type="molecule type" value="Genomic_DNA"/>
</dbReference>
<dbReference type="EMBL" id="AL513025">
    <property type="protein sequence ID" value="CAI35144.1"/>
    <property type="status" value="JOINED"/>
    <property type="molecule type" value="Genomic_DNA"/>
</dbReference>
<dbReference type="EMBL" id="AL589701">
    <property type="protein sequence ID" value="CAI35144.1"/>
    <property type="status" value="JOINED"/>
    <property type="molecule type" value="Genomic_DNA"/>
</dbReference>
<dbReference type="EMBL" id="AL589701">
    <property type="protein sequence ID" value="CAI35240.1"/>
    <property type="molecule type" value="Genomic_DNA"/>
</dbReference>
<dbReference type="EMBL" id="AL512647">
    <property type="protein sequence ID" value="CAI35240.1"/>
    <property type="status" value="JOINED"/>
    <property type="molecule type" value="Genomic_DNA"/>
</dbReference>
<dbReference type="EMBL" id="AL513025">
    <property type="protein sequence ID" value="CAI35240.1"/>
    <property type="status" value="JOINED"/>
    <property type="molecule type" value="Genomic_DNA"/>
</dbReference>
<dbReference type="EMBL" id="AL645587">
    <property type="protein sequence ID" value="CAI35240.1"/>
    <property type="status" value="JOINED"/>
    <property type="molecule type" value="Genomic_DNA"/>
</dbReference>
<dbReference type="EMBL" id="AL513025">
    <property type="protein sequence ID" value="CAI24675.1"/>
    <property type="molecule type" value="Genomic_DNA"/>
</dbReference>
<dbReference type="EMBL" id="BC016073">
    <property type="protein sequence ID" value="AAH16073.1"/>
    <property type="molecule type" value="mRNA"/>
</dbReference>
<dbReference type="CCDS" id="CCDS26412.1">
    <molecule id="Q91WE6-1"/>
</dbReference>
<dbReference type="CCDS" id="CCDS84016.1">
    <molecule id="Q91WE6-5"/>
</dbReference>
<dbReference type="RefSeq" id="NP_001295415.1">
    <molecule id="Q91WE6-5"/>
    <property type="nucleotide sequence ID" value="NM_001308486.2"/>
</dbReference>
<dbReference type="RefSeq" id="NP_653119.1">
    <molecule id="Q91WE6-1"/>
    <property type="nucleotide sequence ID" value="NM_144536.4"/>
</dbReference>
<dbReference type="SMR" id="Q91WE6"/>
<dbReference type="BioGRID" id="213112">
    <property type="interactions" value="4"/>
</dbReference>
<dbReference type="FunCoup" id="Q91WE6">
    <property type="interactions" value="3008"/>
</dbReference>
<dbReference type="IntAct" id="Q91WE6">
    <property type="interactions" value="1"/>
</dbReference>
<dbReference type="STRING" id="10090.ENSMUSP00000006353"/>
<dbReference type="GlyGen" id="Q91WE6">
    <property type="glycosylation" value="1 site"/>
</dbReference>
<dbReference type="iPTMnet" id="Q91WE6"/>
<dbReference type="PhosphoSitePlus" id="Q91WE6"/>
<dbReference type="SwissPalm" id="Q91WE6"/>
<dbReference type="jPOST" id="Q91WE6"/>
<dbReference type="PaxDb" id="10090-ENSMUSP00000006353"/>
<dbReference type="PeptideAtlas" id="Q91WE6"/>
<dbReference type="ProteomicsDB" id="281145">
    <molecule id="Q91WE6-1"/>
</dbReference>
<dbReference type="ProteomicsDB" id="281146">
    <molecule id="Q91WE6-2"/>
</dbReference>
<dbReference type="ProteomicsDB" id="281147">
    <molecule id="Q91WE6-3"/>
</dbReference>
<dbReference type="ProteomicsDB" id="281148">
    <molecule id="Q91WE6-4"/>
</dbReference>
<dbReference type="ProteomicsDB" id="281149">
    <molecule id="Q91WE6-5"/>
</dbReference>
<dbReference type="Pumba" id="Q91WE6"/>
<dbReference type="Antibodypedia" id="2738">
    <property type="antibodies" value="244 antibodies from 32 providers"/>
</dbReference>
<dbReference type="DNASU" id="68916"/>
<dbReference type="Ensembl" id="ENSMUST00000006353.14">
    <molecule id="Q91WE6-1"/>
    <property type="protein sequence ID" value="ENSMUSP00000006353.8"/>
    <property type="gene ID" value="ENSMUSG00000006191.18"/>
</dbReference>
<dbReference type="Ensembl" id="ENSMUST00000091674.12">
    <molecule id="Q91WE6-5"/>
    <property type="protein sequence ID" value="ENSMUSP00000089262.6"/>
    <property type="gene ID" value="ENSMUSG00000006191.18"/>
</dbReference>
<dbReference type="Ensembl" id="ENSMUST00000137225.8">
    <molecule id="Q91WE6-4"/>
    <property type="protein sequence ID" value="ENSMUSP00000117404.2"/>
    <property type="gene ID" value="ENSMUSG00000006191.18"/>
</dbReference>
<dbReference type="Ensembl" id="ENSMUST00000140278.8">
    <molecule id="Q91WE6-2"/>
    <property type="protein sequence ID" value="ENSMUSP00000122249.2"/>
    <property type="gene ID" value="ENSMUSG00000006191.18"/>
</dbReference>
<dbReference type="GeneID" id="68916"/>
<dbReference type="KEGG" id="mmu:68916"/>
<dbReference type="UCSC" id="uc007pyn.1">
    <molecule id="Q91WE6-1"/>
    <property type="organism name" value="mouse"/>
</dbReference>
<dbReference type="AGR" id="MGI:1921765"/>
<dbReference type="CTD" id="54901"/>
<dbReference type="MGI" id="MGI:1921765">
    <property type="gene designation" value="Cdkal1"/>
</dbReference>
<dbReference type="VEuPathDB" id="HostDB:ENSMUSG00000006191"/>
<dbReference type="eggNOG" id="KOG4355">
    <property type="taxonomic scope" value="Eukaryota"/>
</dbReference>
<dbReference type="GeneTree" id="ENSGT00940000155952"/>
<dbReference type="HOGENOM" id="CLU_018697_4_1_1"/>
<dbReference type="InParanoid" id="Q91WE6"/>
<dbReference type="OMA" id="HYAYPTG"/>
<dbReference type="OrthoDB" id="1730074at2759"/>
<dbReference type="PhylomeDB" id="Q91WE6"/>
<dbReference type="TreeFam" id="TF317476"/>
<dbReference type="BioGRID-ORCS" id="68916">
    <property type="hits" value="1 hit in 76 CRISPR screens"/>
</dbReference>
<dbReference type="ChiTaRS" id="Cdkal1">
    <property type="organism name" value="mouse"/>
</dbReference>
<dbReference type="PRO" id="PR:Q91WE6"/>
<dbReference type="Proteomes" id="UP000000589">
    <property type="component" value="Chromosome 13"/>
</dbReference>
<dbReference type="RNAct" id="Q91WE6">
    <property type="molecule type" value="protein"/>
</dbReference>
<dbReference type="Bgee" id="ENSMUSG00000006191">
    <property type="expression patterns" value="Expressed in spermatocyte and 214 other cell types or tissues"/>
</dbReference>
<dbReference type="ExpressionAtlas" id="Q91WE6">
    <property type="expression patterns" value="baseline and differential"/>
</dbReference>
<dbReference type="GO" id="GO:0005783">
    <property type="term" value="C:endoplasmic reticulum"/>
    <property type="evidence" value="ECO:0000314"/>
    <property type="project" value="MGI"/>
</dbReference>
<dbReference type="GO" id="GO:0005789">
    <property type="term" value="C:endoplasmic reticulum membrane"/>
    <property type="evidence" value="ECO:0007669"/>
    <property type="project" value="UniProtKB-SubCell"/>
</dbReference>
<dbReference type="GO" id="GO:0005791">
    <property type="term" value="C:rough endoplasmic reticulum"/>
    <property type="evidence" value="ECO:0000314"/>
    <property type="project" value="MGI"/>
</dbReference>
<dbReference type="GO" id="GO:0051539">
    <property type="term" value="F:4 iron, 4 sulfur cluster binding"/>
    <property type="evidence" value="ECO:0007669"/>
    <property type="project" value="UniProtKB-KW"/>
</dbReference>
<dbReference type="GO" id="GO:0046872">
    <property type="term" value="F:metal ion binding"/>
    <property type="evidence" value="ECO:0007669"/>
    <property type="project" value="UniProtKB-KW"/>
</dbReference>
<dbReference type="GO" id="GO:0035598">
    <property type="term" value="F:N6-threonylcarbomyladenosine methylthiotransferase activity"/>
    <property type="evidence" value="ECO:0000315"/>
    <property type="project" value="MGI"/>
</dbReference>
<dbReference type="GO" id="GO:0061712">
    <property type="term" value="F:tRNA (N(6)-L-threonylcarbamoyladenosine(37)-C(2))-methylthiotransferase"/>
    <property type="evidence" value="ECO:0007669"/>
    <property type="project" value="UniProtKB-EC"/>
</dbReference>
<dbReference type="GO" id="GO:1990145">
    <property type="term" value="P:maintenance of translational fidelity"/>
    <property type="evidence" value="ECO:0000315"/>
    <property type="project" value="MGI"/>
</dbReference>
<dbReference type="GO" id="GO:0035600">
    <property type="term" value="P:tRNA methylthiolation"/>
    <property type="evidence" value="ECO:0000315"/>
    <property type="project" value="MGI"/>
</dbReference>
<dbReference type="CDD" id="cd01335">
    <property type="entry name" value="Radical_SAM"/>
    <property type="match status" value="1"/>
</dbReference>
<dbReference type="FunFam" id="3.40.50.12160:FF:000005">
    <property type="entry name" value="threonylcarbamoyladenosine tRNA methylthiotransferase isoform X1"/>
    <property type="match status" value="1"/>
</dbReference>
<dbReference type="FunFam" id="3.80.30.20:FF:000002">
    <property type="entry name" value="threonylcarbamoyladenosine tRNA methylthiotransferase isoform X2"/>
    <property type="match status" value="1"/>
</dbReference>
<dbReference type="Gene3D" id="3.40.50.12160">
    <property type="entry name" value="Methylthiotransferase, N-terminal domain"/>
    <property type="match status" value="1"/>
</dbReference>
<dbReference type="Gene3D" id="3.80.30.20">
    <property type="entry name" value="tm_1862 like domain"/>
    <property type="match status" value="1"/>
</dbReference>
<dbReference type="InterPro" id="IPR006638">
    <property type="entry name" value="Elp3/MiaA/NifB-like_rSAM"/>
</dbReference>
<dbReference type="InterPro" id="IPR005839">
    <property type="entry name" value="Methylthiotransferase"/>
</dbReference>
<dbReference type="InterPro" id="IPR020612">
    <property type="entry name" value="Methylthiotransferase_CS"/>
</dbReference>
<dbReference type="InterPro" id="IPR013848">
    <property type="entry name" value="Methylthiotransferase_N"/>
</dbReference>
<dbReference type="InterPro" id="IPR038135">
    <property type="entry name" value="Methylthiotransferase_N_sf"/>
</dbReference>
<dbReference type="InterPro" id="IPR006466">
    <property type="entry name" value="MiaB-like_arc_euk"/>
</dbReference>
<dbReference type="InterPro" id="IPR007197">
    <property type="entry name" value="rSAM"/>
</dbReference>
<dbReference type="InterPro" id="IPR023404">
    <property type="entry name" value="rSAM_horseshoe"/>
</dbReference>
<dbReference type="InterPro" id="IPR002792">
    <property type="entry name" value="TRAM_dom"/>
</dbReference>
<dbReference type="NCBIfam" id="TIGR01578">
    <property type="entry name" value="MiaB-like-B"/>
    <property type="match status" value="1"/>
</dbReference>
<dbReference type="NCBIfam" id="TIGR00089">
    <property type="entry name" value="MiaB/RimO family radical SAM methylthiotransferase"/>
    <property type="match status" value="1"/>
</dbReference>
<dbReference type="PANTHER" id="PTHR11918">
    <property type="entry name" value="RADICAL SAM PROTEINS"/>
    <property type="match status" value="1"/>
</dbReference>
<dbReference type="PANTHER" id="PTHR11918:SF45">
    <property type="entry name" value="THREONYLCARBAMOYLADENOSINE TRNA METHYLTHIOTRANSFERASE"/>
    <property type="match status" value="1"/>
</dbReference>
<dbReference type="Pfam" id="PF04055">
    <property type="entry name" value="Radical_SAM"/>
    <property type="match status" value="1"/>
</dbReference>
<dbReference type="Pfam" id="PF01938">
    <property type="entry name" value="TRAM"/>
    <property type="match status" value="1"/>
</dbReference>
<dbReference type="Pfam" id="PF00919">
    <property type="entry name" value="UPF0004"/>
    <property type="match status" value="1"/>
</dbReference>
<dbReference type="SFLD" id="SFLDG01082">
    <property type="entry name" value="B12-binding_domain_containing"/>
    <property type="match status" value="1"/>
</dbReference>
<dbReference type="SFLD" id="SFLDS00029">
    <property type="entry name" value="Radical_SAM"/>
    <property type="match status" value="1"/>
</dbReference>
<dbReference type="SMART" id="SM00729">
    <property type="entry name" value="Elp3"/>
    <property type="match status" value="1"/>
</dbReference>
<dbReference type="SUPFAM" id="SSF102114">
    <property type="entry name" value="Radical SAM enzymes"/>
    <property type="match status" value="1"/>
</dbReference>
<dbReference type="PROSITE" id="PS51449">
    <property type="entry name" value="MTTASE_N"/>
    <property type="match status" value="1"/>
</dbReference>
<dbReference type="PROSITE" id="PS01278">
    <property type="entry name" value="MTTASE_RADICAL"/>
    <property type="match status" value="1"/>
</dbReference>
<dbReference type="PROSITE" id="PS51918">
    <property type="entry name" value="RADICAL_SAM"/>
    <property type="match status" value="1"/>
</dbReference>
<dbReference type="PROSITE" id="PS50926">
    <property type="entry name" value="TRAM"/>
    <property type="match status" value="1"/>
</dbReference>
<accession>Q91WE6</accession>
<accession>Q3TE97</accession>
<accession>Q3V3D2</accession>
<accession>Q5T0I5</accession>
<accession>Q8C4B0</accession>
<accession>Q9CT69</accession>
<sequence length="578" mass="65289">MPSASCDVLLDDIEDIISQEDSKPQDRQFSRKHVFPKVRRRNTQKYLQEEPRPPSDSTIPGIQKIWIRTWGCSHNNSDGEYMAGQLAAYGYKITENASDADLWLLNSCTVKNPAEDHFRNSIKKAQEENKKVVLAGCVPQAQPRQDYLKGLSIIGVQQIDRVVEVVEETIKGHSVRLLGQKKDNGKRLGGARLDLPKIRKNPLIEIISINTGCLNACTYCKTKHARGNLASYPIDELVERAKQSFQEGVCEIWLTSEDTGAYGRDIGTDLPTLLWKLVEVIPEGAMLRLGMTNPPYILEHLEEMAKILNHPRVYAFLHIPVQSASDSVLMDMKREYCVADFKRVVDFLKEKVPGITIATDIICGFPGETDQDFQETVKLVEEYKFPSLFINQFYPRPGTPAAKAEQVPAHVKKQRTKDLSRVFHSYNPYDHKIGERQQVLVTEESFDSKFYVAHNRFYEQVLVPKNPAFMGKMVEVDIYESGKHFLKGQPVSETRVYTPSISKPLAKGEVSGLTKEFRNRLGNHPNGTSDTCPATQHGSAYSRMVLQMSQYDCALKVATGLALLALLLHFWPDSLLTM</sequence>
<reference key="1">
    <citation type="journal article" date="2005" name="Science">
        <title>The transcriptional landscape of the mammalian genome.</title>
        <authorList>
            <person name="Carninci P."/>
            <person name="Kasukawa T."/>
            <person name="Katayama S."/>
            <person name="Gough J."/>
            <person name="Frith M.C."/>
            <person name="Maeda N."/>
            <person name="Oyama R."/>
            <person name="Ravasi T."/>
            <person name="Lenhard B."/>
            <person name="Wells C."/>
            <person name="Kodzius R."/>
            <person name="Shimokawa K."/>
            <person name="Bajic V.B."/>
            <person name="Brenner S.E."/>
            <person name="Batalov S."/>
            <person name="Forrest A.R."/>
            <person name="Zavolan M."/>
            <person name="Davis M.J."/>
            <person name="Wilming L.G."/>
            <person name="Aidinis V."/>
            <person name="Allen J.E."/>
            <person name="Ambesi-Impiombato A."/>
            <person name="Apweiler R."/>
            <person name="Aturaliya R.N."/>
            <person name="Bailey T.L."/>
            <person name="Bansal M."/>
            <person name="Baxter L."/>
            <person name="Beisel K.W."/>
            <person name="Bersano T."/>
            <person name="Bono H."/>
            <person name="Chalk A.M."/>
            <person name="Chiu K.P."/>
            <person name="Choudhary V."/>
            <person name="Christoffels A."/>
            <person name="Clutterbuck D.R."/>
            <person name="Crowe M.L."/>
            <person name="Dalla E."/>
            <person name="Dalrymple B.P."/>
            <person name="de Bono B."/>
            <person name="Della Gatta G."/>
            <person name="di Bernardo D."/>
            <person name="Down T."/>
            <person name="Engstrom P."/>
            <person name="Fagiolini M."/>
            <person name="Faulkner G."/>
            <person name="Fletcher C.F."/>
            <person name="Fukushima T."/>
            <person name="Furuno M."/>
            <person name="Futaki S."/>
            <person name="Gariboldi M."/>
            <person name="Georgii-Hemming P."/>
            <person name="Gingeras T.R."/>
            <person name="Gojobori T."/>
            <person name="Green R.E."/>
            <person name="Gustincich S."/>
            <person name="Harbers M."/>
            <person name="Hayashi Y."/>
            <person name="Hensch T.K."/>
            <person name="Hirokawa N."/>
            <person name="Hill D."/>
            <person name="Huminiecki L."/>
            <person name="Iacono M."/>
            <person name="Ikeo K."/>
            <person name="Iwama A."/>
            <person name="Ishikawa T."/>
            <person name="Jakt M."/>
            <person name="Kanapin A."/>
            <person name="Katoh M."/>
            <person name="Kawasawa Y."/>
            <person name="Kelso J."/>
            <person name="Kitamura H."/>
            <person name="Kitano H."/>
            <person name="Kollias G."/>
            <person name="Krishnan S.P."/>
            <person name="Kruger A."/>
            <person name="Kummerfeld S.K."/>
            <person name="Kurochkin I.V."/>
            <person name="Lareau L.F."/>
            <person name="Lazarevic D."/>
            <person name="Lipovich L."/>
            <person name="Liu J."/>
            <person name="Liuni S."/>
            <person name="McWilliam S."/>
            <person name="Madan Babu M."/>
            <person name="Madera M."/>
            <person name="Marchionni L."/>
            <person name="Matsuda H."/>
            <person name="Matsuzawa S."/>
            <person name="Miki H."/>
            <person name="Mignone F."/>
            <person name="Miyake S."/>
            <person name="Morris K."/>
            <person name="Mottagui-Tabar S."/>
            <person name="Mulder N."/>
            <person name="Nakano N."/>
            <person name="Nakauchi H."/>
            <person name="Ng P."/>
            <person name="Nilsson R."/>
            <person name="Nishiguchi S."/>
            <person name="Nishikawa S."/>
            <person name="Nori F."/>
            <person name="Ohara O."/>
            <person name="Okazaki Y."/>
            <person name="Orlando V."/>
            <person name="Pang K.C."/>
            <person name="Pavan W.J."/>
            <person name="Pavesi G."/>
            <person name="Pesole G."/>
            <person name="Petrovsky N."/>
            <person name="Piazza S."/>
            <person name="Reed J."/>
            <person name="Reid J.F."/>
            <person name="Ring B.Z."/>
            <person name="Ringwald M."/>
            <person name="Rost B."/>
            <person name="Ruan Y."/>
            <person name="Salzberg S.L."/>
            <person name="Sandelin A."/>
            <person name="Schneider C."/>
            <person name="Schoenbach C."/>
            <person name="Sekiguchi K."/>
            <person name="Semple C.A."/>
            <person name="Seno S."/>
            <person name="Sessa L."/>
            <person name="Sheng Y."/>
            <person name="Shibata Y."/>
            <person name="Shimada H."/>
            <person name="Shimada K."/>
            <person name="Silva D."/>
            <person name="Sinclair B."/>
            <person name="Sperling S."/>
            <person name="Stupka E."/>
            <person name="Sugiura K."/>
            <person name="Sultana R."/>
            <person name="Takenaka Y."/>
            <person name="Taki K."/>
            <person name="Tammoja K."/>
            <person name="Tan S.L."/>
            <person name="Tang S."/>
            <person name="Taylor M.S."/>
            <person name="Tegner J."/>
            <person name="Teichmann S.A."/>
            <person name="Ueda H.R."/>
            <person name="van Nimwegen E."/>
            <person name="Verardo R."/>
            <person name="Wei C.L."/>
            <person name="Yagi K."/>
            <person name="Yamanishi H."/>
            <person name="Zabarovsky E."/>
            <person name="Zhu S."/>
            <person name="Zimmer A."/>
            <person name="Hide W."/>
            <person name="Bult C."/>
            <person name="Grimmond S.M."/>
            <person name="Teasdale R.D."/>
            <person name="Liu E.T."/>
            <person name="Brusic V."/>
            <person name="Quackenbush J."/>
            <person name="Wahlestedt C."/>
            <person name="Mattick J.S."/>
            <person name="Hume D.A."/>
            <person name="Kai C."/>
            <person name="Sasaki D."/>
            <person name="Tomaru Y."/>
            <person name="Fukuda S."/>
            <person name="Kanamori-Katayama M."/>
            <person name="Suzuki M."/>
            <person name="Aoki J."/>
            <person name="Arakawa T."/>
            <person name="Iida J."/>
            <person name="Imamura K."/>
            <person name="Itoh M."/>
            <person name="Kato T."/>
            <person name="Kawaji H."/>
            <person name="Kawagashira N."/>
            <person name="Kawashima T."/>
            <person name="Kojima M."/>
            <person name="Kondo S."/>
            <person name="Konno H."/>
            <person name="Nakano K."/>
            <person name="Ninomiya N."/>
            <person name="Nishio T."/>
            <person name="Okada M."/>
            <person name="Plessy C."/>
            <person name="Shibata K."/>
            <person name="Shiraki T."/>
            <person name="Suzuki S."/>
            <person name="Tagami M."/>
            <person name="Waki K."/>
            <person name="Watahiki A."/>
            <person name="Okamura-Oho Y."/>
            <person name="Suzuki H."/>
            <person name="Kawai J."/>
            <person name="Hayashizaki Y."/>
        </authorList>
    </citation>
    <scope>NUCLEOTIDE SEQUENCE [LARGE SCALE MRNA] (ISOFORMS 2; 3; 4 AND 5)</scope>
    <source>
        <strain>C57BL/6J</strain>
        <strain>NOD</strain>
        <tissue>Cerebellum</tissue>
        <tissue>Thymus</tissue>
    </source>
</reference>
<reference key="2">
    <citation type="journal article" date="2009" name="PLoS Biol.">
        <title>Lineage-specific biology revealed by a finished genome assembly of the mouse.</title>
        <authorList>
            <person name="Church D.M."/>
            <person name="Goodstadt L."/>
            <person name="Hillier L.W."/>
            <person name="Zody M.C."/>
            <person name="Goldstein S."/>
            <person name="She X."/>
            <person name="Bult C.J."/>
            <person name="Agarwala R."/>
            <person name="Cherry J.L."/>
            <person name="DiCuccio M."/>
            <person name="Hlavina W."/>
            <person name="Kapustin Y."/>
            <person name="Meric P."/>
            <person name="Maglott D."/>
            <person name="Birtle Z."/>
            <person name="Marques A.C."/>
            <person name="Graves T."/>
            <person name="Zhou S."/>
            <person name="Teague B."/>
            <person name="Potamousis K."/>
            <person name="Churas C."/>
            <person name="Place M."/>
            <person name="Herschleb J."/>
            <person name="Runnheim R."/>
            <person name="Forrest D."/>
            <person name="Amos-Landgraf J."/>
            <person name="Schwartz D.C."/>
            <person name="Cheng Z."/>
            <person name="Lindblad-Toh K."/>
            <person name="Eichler E.E."/>
            <person name="Ponting C.P."/>
        </authorList>
    </citation>
    <scope>NUCLEOTIDE SEQUENCE [LARGE SCALE GENOMIC DNA]</scope>
    <source>
        <strain>C57BL/6J</strain>
    </source>
</reference>
<reference key="3">
    <citation type="journal article" date="2004" name="Genome Res.">
        <title>The status, quality, and expansion of the NIH full-length cDNA project: the Mammalian Gene Collection (MGC).</title>
        <authorList>
            <consortium name="The MGC Project Team"/>
        </authorList>
    </citation>
    <scope>NUCLEOTIDE SEQUENCE [LARGE SCALE MRNA] (ISOFORM 1)</scope>
    <source>
        <tissue>Eye</tissue>
    </source>
</reference>
<reference key="4">
    <citation type="journal article" date="2010" name="J. Biol. Chem.">
        <title>Identification of eukaryotic and prokaryotic methylthiotransferase for biosynthesis of 2-methylthio-N6-threonylcarbamoyladenosine in tRNA.</title>
        <authorList>
            <person name="Arragain S."/>
            <person name="Handelman S.K."/>
            <person name="Forouhar F."/>
            <person name="Wei F.Y."/>
            <person name="Tomizawa K."/>
            <person name="Hunt J.F."/>
            <person name="Douki T."/>
            <person name="Fontecave M."/>
            <person name="Mulliez E."/>
            <person name="Atta M."/>
        </authorList>
    </citation>
    <scope>FUNCTION</scope>
    <scope>CATALYTIC ACTIVITY</scope>
</reference>
<reference key="5">
    <citation type="journal article" date="2012" name="J. Biol. Chem.">
        <title>CDK5 regulatory subunit associated protein 1-like 1 (CDKAL1) is a tail-anchored protein in the endoplasmic reticulum (ER) of insulinoma cells.</title>
        <authorList>
            <person name="Brambillasca S."/>
            <person name="Altkrueger A."/>
            <person name="Colombo S."/>
            <person name="Friedrich A."/>
            <person name="Eickelmann P."/>
            <person name="Mark M."/>
            <person name="Borgese N."/>
            <person name="Solimena M."/>
        </authorList>
    </citation>
    <scope>TISSUE SPECIFICITY</scope>
</reference>